<organism>
    <name type="scientific">Clostridium tetani (strain Massachusetts / E88)</name>
    <dbReference type="NCBI Taxonomy" id="212717"/>
    <lineage>
        <taxon>Bacteria</taxon>
        <taxon>Bacillati</taxon>
        <taxon>Bacillota</taxon>
        <taxon>Clostridia</taxon>
        <taxon>Eubacteriales</taxon>
        <taxon>Clostridiaceae</taxon>
        <taxon>Clostridium</taxon>
    </lineage>
</organism>
<accession>Q899G3</accession>
<protein>
    <recommendedName>
        <fullName evidence="1">NAD-dependent protein deacetylase</fullName>
        <ecNumber evidence="1 2">2.3.1.286</ecNumber>
    </recommendedName>
    <alternativeName>
        <fullName evidence="1">Regulatory protein SIR2 homolog</fullName>
    </alternativeName>
</protein>
<sequence length="247" mass="27661">MDTRKNLKELIKSSSNIVFFGGAGVSTESNIPDFRSEEGLYKTKSNFSYSPEVMLSHSFFKEHTEDFFDFYKEKMIYKYAKPNLAHHALAKLEKVGKLKAIITQNIDGLHQLAGSKNVIELHGGVGRNYCMDCNKFFDLNYILNNKEVVPKCDVCGGIVKPDVVLYEEPLNMDNINNAVRYVENSDVLIVGGTSLVVYPAANLIHYYKGNKLVLINKSSTPYDRKAQIVINDSIGSILGGIVEELGY</sequence>
<evidence type="ECO:0000255" key="1">
    <source>
        <dbReference type="HAMAP-Rule" id="MF_01968"/>
    </source>
</evidence>
<evidence type="ECO:0000255" key="2">
    <source>
        <dbReference type="PROSITE-ProRule" id="PRU00236"/>
    </source>
</evidence>
<proteinExistence type="inferred from homology"/>
<reference key="1">
    <citation type="journal article" date="2003" name="Proc. Natl. Acad. Sci. U.S.A.">
        <title>The genome sequence of Clostridium tetani, the causative agent of tetanus disease.</title>
        <authorList>
            <person name="Brueggemann H."/>
            <person name="Baeumer S."/>
            <person name="Fricke W.F."/>
            <person name="Wiezer A."/>
            <person name="Liesegang H."/>
            <person name="Decker I."/>
            <person name="Herzberg C."/>
            <person name="Martinez-Arias R."/>
            <person name="Merkl R."/>
            <person name="Henne A."/>
            <person name="Gottschalk G."/>
        </authorList>
    </citation>
    <scope>NUCLEOTIDE SEQUENCE [LARGE SCALE GENOMIC DNA]</scope>
    <source>
        <strain>Massachusetts / E88</strain>
    </source>
</reference>
<feature type="chain" id="PRO_0000110307" description="NAD-dependent protein deacetylase">
    <location>
        <begin position="1"/>
        <end position="247"/>
    </location>
</feature>
<feature type="domain" description="Deacetylase sirtuin-type" evidence="2">
    <location>
        <begin position="1"/>
        <end position="247"/>
    </location>
</feature>
<feature type="active site" description="Proton acceptor" evidence="2">
    <location>
        <position position="122"/>
    </location>
</feature>
<feature type="binding site" evidence="1">
    <location>
        <position position="23"/>
    </location>
    <ligand>
        <name>NAD(+)</name>
        <dbReference type="ChEBI" id="CHEBI:57540"/>
    </ligand>
</feature>
<feature type="binding site" evidence="1">
    <location>
        <position position="27"/>
    </location>
    <ligand>
        <name>NAD(+)</name>
        <dbReference type="ChEBI" id="CHEBI:57540"/>
    </ligand>
</feature>
<feature type="binding site" evidence="1">
    <location>
        <position position="34"/>
    </location>
    <ligand>
        <name>NAD(+)</name>
        <dbReference type="ChEBI" id="CHEBI:57540"/>
    </ligand>
</feature>
<feature type="binding site" evidence="1">
    <location>
        <position position="34"/>
    </location>
    <ligand>
        <name>nicotinamide</name>
        <dbReference type="ChEBI" id="CHEBI:17154"/>
    </ligand>
</feature>
<feature type="binding site" evidence="1">
    <location>
        <position position="35"/>
    </location>
    <ligand>
        <name>NAD(+)</name>
        <dbReference type="ChEBI" id="CHEBI:57540"/>
    </ligand>
</feature>
<feature type="binding site" evidence="1">
    <location>
        <position position="104"/>
    </location>
    <ligand>
        <name>NAD(+)</name>
        <dbReference type="ChEBI" id="CHEBI:57540"/>
    </ligand>
</feature>
<feature type="binding site" evidence="1">
    <location>
        <position position="106"/>
    </location>
    <ligand>
        <name>NAD(+)</name>
        <dbReference type="ChEBI" id="CHEBI:57540"/>
    </ligand>
</feature>
<feature type="binding site" evidence="1">
    <location>
        <position position="106"/>
    </location>
    <ligand>
        <name>nicotinamide</name>
        <dbReference type="ChEBI" id="CHEBI:17154"/>
    </ligand>
</feature>
<feature type="binding site" evidence="1">
    <location>
        <position position="107"/>
    </location>
    <ligand>
        <name>NAD(+)</name>
        <dbReference type="ChEBI" id="CHEBI:57540"/>
    </ligand>
</feature>
<feature type="binding site" evidence="1">
    <location>
        <position position="107"/>
    </location>
    <ligand>
        <name>nicotinamide</name>
        <dbReference type="ChEBI" id="CHEBI:17154"/>
    </ligand>
</feature>
<feature type="binding site" evidence="1">
    <location>
        <position position="122"/>
    </location>
    <ligand>
        <name>NAD(+)</name>
        <dbReference type="ChEBI" id="CHEBI:57540"/>
    </ligand>
</feature>
<feature type="binding site" evidence="1">
    <location>
        <position position="130"/>
    </location>
    <ligand>
        <name>Zn(2+)</name>
        <dbReference type="ChEBI" id="CHEBI:29105"/>
    </ligand>
</feature>
<feature type="binding site" evidence="1">
    <location>
        <position position="133"/>
    </location>
    <ligand>
        <name>Zn(2+)</name>
        <dbReference type="ChEBI" id="CHEBI:29105"/>
    </ligand>
</feature>
<feature type="binding site" evidence="1">
    <location>
        <position position="152"/>
    </location>
    <ligand>
        <name>Zn(2+)</name>
        <dbReference type="ChEBI" id="CHEBI:29105"/>
    </ligand>
</feature>
<feature type="binding site" evidence="1">
    <location>
        <position position="155"/>
    </location>
    <ligand>
        <name>Zn(2+)</name>
        <dbReference type="ChEBI" id="CHEBI:29105"/>
    </ligand>
</feature>
<feature type="binding site" evidence="1">
    <location>
        <position position="193"/>
    </location>
    <ligand>
        <name>NAD(+)</name>
        <dbReference type="ChEBI" id="CHEBI:57540"/>
    </ligand>
</feature>
<feature type="binding site" evidence="1">
    <location>
        <position position="194"/>
    </location>
    <ligand>
        <name>NAD(+)</name>
        <dbReference type="ChEBI" id="CHEBI:57540"/>
    </ligand>
</feature>
<feature type="binding site" evidence="1">
    <location>
        <position position="216"/>
    </location>
    <ligand>
        <name>NAD(+)</name>
        <dbReference type="ChEBI" id="CHEBI:57540"/>
    </ligand>
</feature>
<feature type="binding site" evidence="1">
    <location>
        <position position="234"/>
    </location>
    <ligand>
        <name>NAD(+)</name>
        <dbReference type="ChEBI" id="CHEBI:57540"/>
    </ligand>
</feature>
<gene>
    <name evidence="1" type="primary">cobB</name>
    <name type="ordered locus">CTC_00216</name>
</gene>
<dbReference type="EC" id="2.3.1.286" evidence="1 2"/>
<dbReference type="EMBL" id="AE015927">
    <property type="protein sequence ID" value="AAO34864.1"/>
    <property type="molecule type" value="Genomic_DNA"/>
</dbReference>
<dbReference type="RefSeq" id="WP_011098533.1">
    <property type="nucleotide sequence ID" value="NC_004557.1"/>
</dbReference>
<dbReference type="SMR" id="Q899G3"/>
<dbReference type="STRING" id="212717.CTC_00216"/>
<dbReference type="GeneID" id="24252522"/>
<dbReference type="KEGG" id="ctc:CTC_00216"/>
<dbReference type="HOGENOM" id="CLU_023643_3_0_9"/>
<dbReference type="OrthoDB" id="9800582at2"/>
<dbReference type="Proteomes" id="UP000001412">
    <property type="component" value="Chromosome"/>
</dbReference>
<dbReference type="GO" id="GO:0005737">
    <property type="term" value="C:cytoplasm"/>
    <property type="evidence" value="ECO:0007669"/>
    <property type="project" value="UniProtKB-SubCell"/>
</dbReference>
<dbReference type="GO" id="GO:0017136">
    <property type="term" value="F:histone deacetylase activity, NAD-dependent"/>
    <property type="evidence" value="ECO:0007669"/>
    <property type="project" value="TreeGrafter"/>
</dbReference>
<dbReference type="GO" id="GO:0070403">
    <property type="term" value="F:NAD+ binding"/>
    <property type="evidence" value="ECO:0007669"/>
    <property type="project" value="UniProtKB-UniRule"/>
</dbReference>
<dbReference type="GO" id="GO:0008270">
    <property type="term" value="F:zinc ion binding"/>
    <property type="evidence" value="ECO:0007669"/>
    <property type="project" value="UniProtKB-UniRule"/>
</dbReference>
<dbReference type="Gene3D" id="3.30.1600.10">
    <property type="entry name" value="SIR2/SIRT2 'Small Domain"/>
    <property type="match status" value="1"/>
</dbReference>
<dbReference type="Gene3D" id="3.40.50.1220">
    <property type="entry name" value="TPP-binding domain"/>
    <property type="match status" value="1"/>
</dbReference>
<dbReference type="HAMAP" id="MF_01968">
    <property type="entry name" value="Sirtuin_ClassU"/>
    <property type="match status" value="1"/>
</dbReference>
<dbReference type="InterPro" id="IPR029035">
    <property type="entry name" value="DHS-like_NAD/FAD-binding_dom"/>
</dbReference>
<dbReference type="InterPro" id="IPR050134">
    <property type="entry name" value="NAD-dep_sirtuin_deacylases"/>
</dbReference>
<dbReference type="InterPro" id="IPR003000">
    <property type="entry name" value="Sirtuin"/>
</dbReference>
<dbReference type="InterPro" id="IPR026591">
    <property type="entry name" value="Sirtuin_cat_small_dom_sf"/>
</dbReference>
<dbReference type="InterPro" id="IPR028628">
    <property type="entry name" value="Sirtuin_class_U"/>
</dbReference>
<dbReference type="InterPro" id="IPR026590">
    <property type="entry name" value="Ssirtuin_cat_dom"/>
</dbReference>
<dbReference type="NCBIfam" id="NF001752">
    <property type="entry name" value="PRK00481.1-1"/>
    <property type="match status" value="1"/>
</dbReference>
<dbReference type="NCBIfam" id="NF001753">
    <property type="entry name" value="PRK00481.1-3"/>
    <property type="match status" value="1"/>
</dbReference>
<dbReference type="PANTHER" id="PTHR11085:SF4">
    <property type="entry name" value="NAD-DEPENDENT PROTEIN DEACYLASE"/>
    <property type="match status" value="1"/>
</dbReference>
<dbReference type="PANTHER" id="PTHR11085">
    <property type="entry name" value="NAD-DEPENDENT PROTEIN DEACYLASE SIRTUIN-5, MITOCHONDRIAL-RELATED"/>
    <property type="match status" value="1"/>
</dbReference>
<dbReference type="Pfam" id="PF02146">
    <property type="entry name" value="SIR2"/>
    <property type="match status" value="1"/>
</dbReference>
<dbReference type="SUPFAM" id="SSF52467">
    <property type="entry name" value="DHS-like NAD/FAD-binding domain"/>
    <property type="match status" value="1"/>
</dbReference>
<dbReference type="PROSITE" id="PS50305">
    <property type="entry name" value="SIRTUIN"/>
    <property type="match status" value="1"/>
</dbReference>
<comment type="function">
    <text evidence="1">NAD-dependent protein deacetylase which modulates the activities of several enzymes which are inactive in their acetylated form.</text>
</comment>
<comment type="catalytic activity">
    <reaction evidence="1">
        <text>N(6)-acetyl-L-lysyl-[protein] + NAD(+) + H2O = 2''-O-acetyl-ADP-D-ribose + nicotinamide + L-lysyl-[protein]</text>
        <dbReference type="Rhea" id="RHEA:43636"/>
        <dbReference type="Rhea" id="RHEA-COMP:9752"/>
        <dbReference type="Rhea" id="RHEA-COMP:10731"/>
        <dbReference type="ChEBI" id="CHEBI:15377"/>
        <dbReference type="ChEBI" id="CHEBI:17154"/>
        <dbReference type="ChEBI" id="CHEBI:29969"/>
        <dbReference type="ChEBI" id="CHEBI:57540"/>
        <dbReference type="ChEBI" id="CHEBI:61930"/>
        <dbReference type="ChEBI" id="CHEBI:83767"/>
        <dbReference type="EC" id="2.3.1.286"/>
    </reaction>
</comment>
<comment type="cofactor">
    <cofactor evidence="1">
        <name>Zn(2+)</name>
        <dbReference type="ChEBI" id="CHEBI:29105"/>
    </cofactor>
    <text evidence="1">Binds 1 zinc ion per subunit.</text>
</comment>
<comment type="subcellular location">
    <subcellularLocation>
        <location evidence="1">Cytoplasm</location>
    </subcellularLocation>
</comment>
<comment type="similarity">
    <text evidence="1">Belongs to the sirtuin family. Class U subfamily.</text>
</comment>
<name>NPD_CLOTE</name>
<keyword id="KW-0963">Cytoplasm</keyword>
<keyword id="KW-0479">Metal-binding</keyword>
<keyword id="KW-0520">NAD</keyword>
<keyword id="KW-1185">Reference proteome</keyword>
<keyword id="KW-0808">Transferase</keyword>
<keyword id="KW-0862">Zinc</keyword>